<accession>B6HZF5</accession>
<dbReference type="EC" id="2.3.1.129" evidence="1"/>
<dbReference type="EMBL" id="AP009240">
    <property type="protein sequence ID" value="BAG75704.1"/>
    <property type="molecule type" value="Genomic_DNA"/>
</dbReference>
<dbReference type="RefSeq" id="WP_000565966.1">
    <property type="nucleotide sequence ID" value="NC_011415.1"/>
</dbReference>
<dbReference type="SMR" id="B6HZF5"/>
<dbReference type="GeneID" id="93777244"/>
<dbReference type="KEGG" id="ecy:ECSE_0180"/>
<dbReference type="HOGENOM" id="CLU_061249_0_0_6"/>
<dbReference type="UniPathway" id="UPA00359">
    <property type="reaction ID" value="UER00477"/>
</dbReference>
<dbReference type="Proteomes" id="UP000008199">
    <property type="component" value="Chromosome"/>
</dbReference>
<dbReference type="GO" id="GO:0005737">
    <property type="term" value="C:cytoplasm"/>
    <property type="evidence" value="ECO:0007669"/>
    <property type="project" value="UniProtKB-SubCell"/>
</dbReference>
<dbReference type="GO" id="GO:0016020">
    <property type="term" value="C:membrane"/>
    <property type="evidence" value="ECO:0007669"/>
    <property type="project" value="GOC"/>
</dbReference>
<dbReference type="GO" id="GO:0008780">
    <property type="term" value="F:acyl-[acyl-carrier-protein]-UDP-N-acetylglucosamine O-acyltransferase activity"/>
    <property type="evidence" value="ECO:0007669"/>
    <property type="project" value="UniProtKB-UniRule"/>
</dbReference>
<dbReference type="GO" id="GO:0009245">
    <property type="term" value="P:lipid A biosynthetic process"/>
    <property type="evidence" value="ECO:0007669"/>
    <property type="project" value="UniProtKB-UniRule"/>
</dbReference>
<dbReference type="CDD" id="cd03351">
    <property type="entry name" value="LbH_UDP-GlcNAc_AT"/>
    <property type="match status" value="1"/>
</dbReference>
<dbReference type="FunFam" id="1.20.1180.10:FF:000001">
    <property type="entry name" value="Acyl-[acyl-carrier-protein]--UDP-N-acetylglucosamine O-acyltransferase"/>
    <property type="match status" value="1"/>
</dbReference>
<dbReference type="FunFam" id="2.160.10.10:FF:000003">
    <property type="entry name" value="Acyl-[acyl-carrier-protein]--UDP-N-acetylglucosamine O-acyltransferase"/>
    <property type="match status" value="1"/>
</dbReference>
<dbReference type="Gene3D" id="2.160.10.10">
    <property type="entry name" value="Hexapeptide repeat proteins"/>
    <property type="match status" value="1"/>
</dbReference>
<dbReference type="Gene3D" id="1.20.1180.10">
    <property type="entry name" value="Udp N-acetylglucosamine O-acyltransferase, C-terminal domain"/>
    <property type="match status" value="1"/>
</dbReference>
<dbReference type="HAMAP" id="MF_00387">
    <property type="entry name" value="LpxA"/>
    <property type="match status" value="1"/>
</dbReference>
<dbReference type="InterPro" id="IPR029098">
    <property type="entry name" value="Acetyltransf_C"/>
</dbReference>
<dbReference type="InterPro" id="IPR037157">
    <property type="entry name" value="Acetyltransf_C_sf"/>
</dbReference>
<dbReference type="InterPro" id="IPR001451">
    <property type="entry name" value="Hexapep"/>
</dbReference>
<dbReference type="InterPro" id="IPR018357">
    <property type="entry name" value="Hexapep_transf_CS"/>
</dbReference>
<dbReference type="InterPro" id="IPR010137">
    <property type="entry name" value="Lipid_A_LpxA"/>
</dbReference>
<dbReference type="InterPro" id="IPR011004">
    <property type="entry name" value="Trimer_LpxA-like_sf"/>
</dbReference>
<dbReference type="NCBIfam" id="TIGR01852">
    <property type="entry name" value="lipid_A_lpxA"/>
    <property type="match status" value="1"/>
</dbReference>
<dbReference type="NCBIfam" id="NF003657">
    <property type="entry name" value="PRK05289.1"/>
    <property type="match status" value="1"/>
</dbReference>
<dbReference type="PANTHER" id="PTHR43480">
    <property type="entry name" value="ACYL-[ACYL-CARRIER-PROTEIN]--UDP-N-ACETYLGLUCOSAMINE O-ACYLTRANSFERASE"/>
    <property type="match status" value="1"/>
</dbReference>
<dbReference type="PANTHER" id="PTHR43480:SF1">
    <property type="entry name" value="ACYL-[ACYL-CARRIER-PROTEIN]--UDP-N-ACETYLGLUCOSAMINE O-ACYLTRANSFERASE, MITOCHONDRIAL-RELATED"/>
    <property type="match status" value="1"/>
</dbReference>
<dbReference type="Pfam" id="PF13720">
    <property type="entry name" value="Acetyltransf_11"/>
    <property type="match status" value="1"/>
</dbReference>
<dbReference type="Pfam" id="PF00132">
    <property type="entry name" value="Hexapep"/>
    <property type="match status" value="2"/>
</dbReference>
<dbReference type="PIRSF" id="PIRSF000456">
    <property type="entry name" value="UDP-GlcNAc_acltr"/>
    <property type="match status" value="1"/>
</dbReference>
<dbReference type="SUPFAM" id="SSF51161">
    <property type="entry name" value="Trimeric LpxA-like enzymes"/>
    <property type="match status" value="1"/>
</dbReference>
<dbReference type="PROSITE" id="PS00101">
    <property type="entry name" value="HEXAPEP_TRANSFERASES"/>
    <property type="match status" value="2"/>
</dbReference>
<reference key="1">
    <citation type="journal article" date="2008" name="DNA Res.">
        <title>Complete genome sequence and comparative analysis of the wild-type commensal Escherichia coli strain SE11 isolated from a healthy adult.</title>
        <authorList>
            <person name="Oshima K."/>
            <person name="Toh H."/>
            <person name="Ogura Y."/>
            <person name="Sasamoto H."/>
            <person name="Morita H."/>
            <person name="Park S.-H."/>
            <person name="Ooka T."/>
            <person name="Iyoda S."/>
            <person name="Taylor T.D."/>
            <person name="Hayashi T."/>
            <person name="Itoh K."/>
            <person name="Hattori M."/>
        </authorList>
    </citation>
    <scope>NUCLEOTIDE SEQUENCE [LARGE SCALE GENOMIC DNA]</scope>
    <source>
        <strain>SE11</strain>
    </source>
</reference>
<comment type="function">
    <text evidence="1">Involved in the biosynthesis of lipid A, a phosphorylated glycolipid that anchors the lipopolysaccharide to the outer membrane of the cell.</text>
</comment>
<comment type="catalytic activity">
    <reaction evidence="1">
        <text>a (3R)-hydroxyacyl-[ACP] + UDP-N-acetyl-alpha-D-glucosamine = a UDP-3-O-[(3R)-3-hydroxyacyl]-N-acetyl-alpha-D-glucosamine + holo-[ACP]</text>
        <dbReference type="Rhea" id="RHEA:67812"/>
        <dbReference type="Rhea" id="RHEA-COMP:9685"/>
        <dbReference type="Rhea" id="RHEA-COMP:9945"/>
        <dbReference type="ChEBI" id="CHEBI:57705"/>
        <dbReference type="ChEBI" id="CHEBI:64479"/>
        <dbReference type="ChEBI" id="CHEBI:78827"/>
        <dbReference type="ChEBI" id="CHEBI:173225"/>
        <dbReference type="EC" id="2.3.1.129"/>
    </reaction>
</comment>
<comment type="pathway">
    <text evidence="1">Glycolipid biosynthesis; lipid IV(A) biosynthesis; lipid IV(A) from (3R)-3-hydroxytetradecanoyl-[acyl-carrier-protein] and UDP-N-acetyl-alpha-D-glucosamine: step 1/6.</text>
</comment>
<comment type="subunit">
    <text evidence="1">Homotrimer.</text>
</comment>
<comment type="subcellular location">
    <subcellularLocation>
        <location evidence="1">Cytoplasm</location>
    </subcellularLocation>
</comment>
<comment type="similarity">
    <text evidence="1">Belongs to the transferase hexapeptide repeat family. LpxA subfamily.</text>
</comment>
<organism>
    <name type="scientific">Escherichia coli (strain SE11)</name>
    <dbReference type="NCBI Taxonomy" id="409438"/>
    <lineage>
        <taxon>Bacteria</taxon>
        <taxon>Pseudomonadati</taxon>
        <taxon>Pseudomonadota</taxon>
        <taxon>Gammaproteobacteria</taxon>
        <taxon>Enterobacterales</taxon>
        <taxon>Enterobacteriaceae</taxon>
        <taxon>Escherichia</taxon>
    </lineage>
</organism>
<proteinExistence type="inferred from homology"/>
<sequence>MIDKSAFVHPTAIVEEGASIGANAHIGPFCIVGPHVEIGEGTVLKSHVVVNGHTKIGRDNEIYQFASIGEVNQDLKYAGEPTRVEIGDRNRIRESVTIHRGTVQGGGLTKVGSDNLLMINAHIAHDCTVGNRCILANNATLAGHVSVDDFAIIGGMTAVHQFCIIGAHVMVGGCSGVAQDVPPYVIAQGNHATPFGVNIEGLKRRGFSREAITAIRNAYKLIYRSGKTLDEVKPEIAELAETYPEVKAFTDFFARSTRGLIR</sequence>
<keyword id="KW-0012">Acyltransferase</keyword>
<keyword id="KW-0963">Cytoplasm</keyword>
<keyword id="KW-0441">Lipid A biosynthesis</keyword>
<keyword id="KW-0444">Lipid biosynthesis</keyword>
<keyword id="KW-0443">Lipid metabolism</keyword>
<keyword id="KW-0677">Repeat</keyword>
<keyword id="KW-0808">Transferase</keyword>
<evidence type="ECO:0000255" key="1">
    <source>
        <dbReference type="HAMAP-Rule" id="MF_00387"/>
    </source>
</evidence>
<protein>
    <recommendedName>
        <fullName evidence="1">Acyl-[acyl-carrier-protein]--UDP-N-acetylglucosamine O-acyltransferase</fullName>
        <shortName evidence="1">UDP-N-acetylglucosamine acyltransferase</shortName>
        <ecNumber evidence="1">2.3.1.129</ecNumber>
    </recommendedName>
</protein>
<name>LPXA_ECOSE</name>
<gene>
    <name evidence="1" type="primary">lpxA</name>
    <name type="ordered locus">ECSE_0180</name>
</gene>
<feature type="chain" id="PRO_1000122706" description="Acyl-[acyl-carrier-protein]--UDP-N-acetylglucosamine O-acyltransferase">
    <location>
        <begin position="1"/>
        <end position="262"/>
    </location>
</feature>